<accession>P21008</accession>
<gene>
    <name type="primary">OPG114</name>
    <name type="ORF">D2L</name>
</gene>
<dbReference type="EMBL" id="M35027">
    <property type="protein sequence ID" value="AAA48097.1"/>
    <property type="molecule type" value="Genomic_DNA"/>
</dbReference>
<dbReference type="PIR" id="A42515">
    <property type="entry name" value="QQVZCH"/>
</dbReference>
<dbReference type="Proteomes" id="UP000008269">
    <property type="component" value="Segment"/>
</dbReference>
<dbReference type="GO" id="GO:0044423">
    <property type="term" value="C:virion component"/>
    <property type="evidence" value="ECO:0007669"/>
    <property type="project" value="UniProtKB-KW"/>
</dbReference>
<dbReference type="InterPro" id="IPR006791">
    <property type="entry name" value="Pox_D2"/>
</dbReference>
<dbReference type="Pfam" id="PF04701">
    <property type="entry name" value="Pox_D2"/>
    <property type="match status" value="1"/>
</dbReference>
<evidence type="ECO:0000250" key="1">
    <source>
        <dbReference type="UniProtKB" id="P04300"/>
    </source>
</evidence>
<evidence type="ECO:0000305" key="2"/>
<reference key="1">
    <citation type="journal article" date="1990" name="Virology">
        <title>The complete DNA sequence of vaccinia virus.</title>
        <authorList>
            <person name="Goebel S.J."/>
            <person name="Johnson G.P."/>
            <person name="Perkus M.E."/>
            <person name="Davis S.W."/>
            <person name="Winslow J.P."/>
            <person name="Paoletti E."/>
        </authorList>
    </citation>
    <scope>NUCLEOTIDE SEQUENCE [LARGE SCALE GENOMIC DNA]</scope>
</reference>
<reference key="2">
    <citation type="journal article" date="1990" name="Virology">
        <title>Appendix to 'The complete DNA sequence of vaccinia virus'.</title>
        <authorList>
            <person name="Goebel S.J."/>
            <person name="Johnson G.P."/>
            <person name="Perkus M.E."/>
            <person name="Davis S.W."/>
            <person name="Winslow J.P."/>
            <person name="Paoletti E."/>
        </authorList>
    </citation>
    <scope>NUCLEOTIDE SEQUENCE [LARGE SCALE GENOMIC DNA]</scope>
</reference>
<organism>
    <name type="scientific">Vaccinia virus (strain Copenhagen)</name>
    <name type="common">VACV</name>
    <dbReference type="NCBI Taxonomy" id="10249"/>
    <lineage>
        <taxon>Viruses</taxon>
        <taxon>Varidnaviria</taxon>
        <taxon>Bamfordvirae</taxon>
        <taxon>Nucleocytoviricota</taxon>
        <taxon>Pokkesviricetes</taxon>
        <taxon>Chitovirales</taxon>
        <taxon>Poxviridae</taxon>
        <taxon>Chordopoxvirinae</taxon>
        <taxon>Orthopoxvirus</taxon>
        <taxon>Vaccinia virus</taxon>
    </lineage>
</organism>
<comment type="function">
    <text evidence="1">Late protein which is part of a large complex required for early virion morphogenesis. This complex participates in the formation of virosomes and the incorporation of virosomal contents into nascent immature virions.</text>
</comment>
<comment type="subunit">
    <text evidence="1">Part of a complex composed of the kinase OPG054, OPG092, OPG100, OPG114, OPG115, OPG142 and OPG157.</text>
</comment>
<comment type="subcellular location">
    <subcellularLocation>
        <location evidence="1">Virion</location>
    </subcellularLocation>
    <text evidence="1">Localizes to the virion core.</text>
</comment>
<comment type="induction">
    <text>Expressed in the late phase of the viral replicative cycle.</text>
</comment>
<comment type="similarity">
    <text evidence="2">Belongs to the orthopoxvirus OPG114 family.</text>
</comment>
<organismHost>
    <name type="scientific">Homo sapiens</name>
    <name type="common">Human</name>
    <dbReference type="NCBI Taxonomy" id="9606"/>
</organismHost>
<protein>
    <recommendedName>
        <fullName>Core protein D2</fullName>
    </recommendedName>
</protein>
<name>PG114_VACCC</name>
<feature type="chain" id="PRO_0000099423" description="Core protein D2">
    <location>
        <begin position="1"/>
        <end position="146"/>
    </location>
</feature>
<proteinExistence type="evidence at transcript level"/>
<sequence>MSINIDIKKITDLLNSSILFPDDVQELLREKYIVLERKSNGTPTVAHIYKTMARFDNKSIYRIAKFLFMNRPDVIKLLFLEDVEPLLPDKSINISINNTEYPQLEGPIGTKIALLELFNAFRTGISEPIPYYYLPLRKDINNIVTK</sequence>
<keyword id="KW-0426">Late protein</keyword>
<keyword id="KW-1185">Reference proteome</keyword>
<keyword id="KW-0946">Virion</keyword>